<evidence type="ECO:0000250" key="1"/>
<evidence type="ECO:0000255" key="2">
    <source>
        <dbReference type="PROSITE-ProRule" id="PRU00108"/>
    </source>
</evidence>
<evidence type="ECO:0000256" key="3">
    <source>
        <dbReference type="SAM" id="MobiDB-lite"/>
    </source>
</evidence>
<evidence type="ECO:0000269" key="4">
    <source>
    </source>
</evidence>
<evidence type="ECO:0000305" key="5"/>
<sequence length="366" mass="39624">MASNGMASSPSSFFPPNFLLHMAQQQAAPPHDPQEHHHHHHHGHHGHHHEQQQQQQHHHHLGPPPPPPPHPHNPFLPSSAQCPSLQEFRGMAPMLGKRPMSYGDGGGGGDEVNGGGEDELSDDGSQAGEKKRRLNVEQVRTLEKNFELGNKLEPERKMQLARALGLQPRQVAIWFQNRRARWKTKQLEKDYDALKRQLDAVKAENDALLNHNKKLQAEIVALKGREAASELINLNKETEASCSNRSENSSEINLDISRTPPPDAAALDTAPTAHHHHHGGGGGGGGGGGMIPFYTSIARPASGGGVDIDQLLHSSSGGAGGPKMEHHGGGGNVQAASVDTASFGNLLCGVDEPPPFWPWPDHQHFH</sequence>
<reference key="1">
    <citation type="journal article" date="2005" name="Genome Res.">
        <title>Sequence, annotation, and analysis of synteny between rice chromosome 3 and diverged grass species.</title>
        <authorList>
            <consortium name="The rice chromosome 3 sequencing consortium"/>
            <person name="Buell C.R."/>
            <person name="Yuan Q."/>
            <person name="Ouyang S."/>
            <person name="Liu J."/>
            <person name="Zhu W."/>
            <person name="Wang A."/>
            <person name="Maiti R."/>
            <person name="Haas B."/>
            <person name="Wortman J."/>
            <person name="Pertea M."/>
            <person name="Jones K.M."/>
            <person name="Kim M."/>
            <person name="Overton L."/>
            <person name="Tsitrin T."/>
            <person name="Fadrosh D."/>
            <person name="Bera J."/>
            <person name="Weaver B."/>
            <person name="Jin S."/>
            <person name="Johri S."/>
            <person name="Reardon M."/>
            <person name="Webb K."/>
            <person name="Hill J."/>
            <person name="Moffat K."/>
            <person name="Tallon L."/>
            <person name="Van Aken S."/>
            <person name="Lewis M."/>
            <person name="Utterback T."/>
            <person name="Feldblyum T."/>
            <person name="Zismann V."/>
            <person name="Iobst S."/>
            <person name="Hsiao J."/>
            <person name="de Vazeille A.R."/>
            <person name="Salzberg S.L."/>
            <person name="White O."/>
            <person name="Fraser C.M."/>
            <person name="Yu Y."/>
            <person name="Kim H."/>
            <person name="Rambo T."/>
            <person name="Currie J."/>
            <person name="Collura K."/>
            <person name="Kernodle-Thompson S."/>
            <person name="Wei F."/>
            <person name="Kudrna K."/>
            <person name="Ammiraju J.S.S."/>
            <person name="Luo M."/>
            <person name="Goicoechea J.L."/>
            <person name="Wing R.A."/>
            <person name="Henry D."/>
            <person name="Oates R."/>
            <person name="Palmer M."/>
            <person name="Pries G."/>
            <person name="Saski C."/>
            <person name="Simmons J."/>
            <person name="Soderlund C."/>
            <person name="Nelson W."/>
            <person name="de la Bastide M."/>
            <person name="Spiegel L."/>
            <person name="Nascimento L."/>
            <person name="Huang E."/>
            <person name="Preston R."/>
            <person name="Zutavern T."/>
            <person name="Palmer L."/>
            <person name="O'Shaughnessy A."/>
            <person name="Dike S."/>
            <person name="McCombie W.R."/>
            <person name="Minx P."/>
            <person name="Cordum H."/>
            <person name="Wilson R."/>
            <person name="Jin W."/>
            <person name="Lee H.R."/>
            <person name="Jiang J."/>
            <person name="Jackson S."/>
        </authorList>
    </citation>
    <scope>NUCLEOTIDE SEQUENCE [LARGE SCALE GENOMIC DNA]</scope>
    <source>
        <strain>cv. Nipponbare</strain>
    </source>
</reference>
<reference key="2">
    <citation type="journal article" date="2005" name="Nature">
        <title>The map-based sequence of the rice genome.</title>
        <authorList>
            <consortium name="International rice genome sequencing project (IRGSP)"/>
        </authorList>
    </citation>
    <scope>NUCLEOTIDE SEQUENCE [LARGE SCALE GENOMIC DNA]</scope>
    <source>
        <strain>cv. Nipponbare</strain>
    </source>
</reference>
<reference key="3">
    <citation type="journal article" date="2008" name="Nucleic Acids Res.">
        <title>The rice annotation project database (RAP-DB): 2008 update.</title>
        <authorList>
            <consortium name="The rice annotation project (RAP)"/>
        </authorList>
    </citation>
    <scope>GENOME REANNOTATION</scope>
    <source>
        <strain>cv. Nipponbare</strain>
    </source>
</reference>
<reference key="4">
    <citation type="journal article" date="2013" name="Rice">
        <title>Improvement of the Oryza sativa Nipponbare reference genome using next generation sequence and optical map data.</title>
        <authorList>
            <person name="Kawahara Y."/>
            <person name="de la Bastide M."/>
            <person name="Hamilton J.P."/>
            <person name="Kanamori H."/>
            <person name="McCombie W.R."/>
            <person name="Ouyang S."/>
            <person name="Schwartz D.C."/>
            <person name="Tanaka T."/>
            <person name="Wu J."/>
            <person name="Zhou S."/>
            <person name="Childs K.L."/>
            <person name="Davidson R.M."/>
            <person name="Lin H."/>
            <person name="Quesada-Ocampo L."/>
            <person name="Vaillancourt B."/>
            <person name="Sakai H."/>
            <person name="Lee S.S."/>
            <person name="Kim J."/>
            <person name="Numa H."/>
            <person name="Itoh T."/>
            <person name="Buell C.R."/>
            <person name="Matsumoto T."/>
        </authorList>
    </citation>
    <scope>GENOME REANNOTATION</scope>
    <source>
        <strain>cv. Nipponbare</strain>
    </source>
</reference>
<reference key="5">
    <citation type="journal article" date="2008" name="Plant Mol. Biol.">
        <title>A genome-wide survey of HD-Zip genes in rice and analysis of drought-responsive family members.</title>
        <authorList>
            <person name="Agalou A."/>
            <person name="Purwantomo S."/>
            <person name="Oevernaes E."/>
            <person name="Johannesson H."/>
            <person name="Zhu X."/>
            <person name="Estiati A."/>
            <person name="de Kam R.J."/>
            <person name="Engstroem P."/>
            <person name="Slamet-Loedin I.H."/>
            <person name="Zhu Z."/>
            <person name="Wang M."/>
            <person name="Xiong L."/>
            <person name="Meijer A.H."/>
            <person name="Ouwerkerk P.B.F."/>
        </authorList>
    </citation>
    <scope>NUCLEOTIDE SEQUENCE [MRNA] OF 224-366</scope>
    <scope>TISSUE SPECIFICITY</scope>
    <scope>GENE FAMILY</scope>
    <scope>NOMENCLATURE</scope>
    <source>
        <strain>cv. Nipponbare</strain>
    </source>
</reference>
<dbReference type="EMBL" id="AC073556">
    <property type="protein sequence ID" value="AAL84311.1"/>
    <property type="molecule type" value="Genomic_DNA"/>
</dbReference>
<dbReference type="EMBL" id="DP000009">
    <property type="protein sequence ID" value="ABF94207.1"/>
    <property type="molecule type" value="Genomic_DNA"/>
</dbReference>
<dbReference type="EMBL" id="AP008209">
    <property type="protein sequence ID" value="BAF11024.1"/>
    <property type="molecule type" value="Genomic_DNA"/>
</dbReference>
<dbReference type="EMBL" id="AP014959">
    <property type="status" value="NOT_ANNOTATED_CDS"/>
    <property type="molecule type" value="Genomic_DNA"/>
</dbReference>
<dbReference type="EMBL" id="AY554028">
    <property type="protein sequence ID" value="AAS83416.1"/>
    <property type="molecule type" value="mRNA"/>
</dbReference>
<dbReference type="RefSeq" id="XP_015629266.1">
    <property type="nucleotide sequence ID" value="XM_015773780.1"/>
</dbReference>
<dbReference type="SMR" id="Q8S7W9"/>
<dbReference type="FunCoup" id="Q8S7W9">
    <property type="interactions" value="1086"/>
</dbReference>
<dbReference type="STRING" id="39947.Q8S7W9"/>
<dbReference type="PaxDb" id="39947-Q8S7W9"/>
<dbReference type="KEGG" id="dosa:Os03g0170600"/>
<dbReference type="InParanoid" id="Q8S7W9"/>
<dbReference type="OrthoDB" id="6159439at2759"/>
<dbReference type="Proteomes" id="UP000000763">
    <property type="component" value="Chromosome 3"/>
</dbReference>
<dbReference type="Proteomes" id="UP000059680">
    <property type="component" value="Chromosome 3"/>
</dbReference>
<dbReference type="GO" id="GO:0005634">
    <property type="term" value="C:nucleus"/>
    <property type="evidence" value="ECO:0000318"/>
    <property type="project" value="GO_Central"/>
</dbReference>
<dbReference type="GO" id="GO:0000981">
    <property type="term" value="F:DNA-binding transcription factor activity, RNA polymerase II-specific"/>
    <property type="evidence" value="ECO:0007669"/>
    <property type="project" value="InterPro"/>
</dbReference>
<dbReference type="GO" id="GO:0043565">
    <property type="term" value="F:sequence-specific DNA binding"/>
    <property type="evidence" value="ECO:0000318"/>
    <property type="project" value="GO_Central"/>
</dbReference>
<dbReference type="GO" id="GO:0045893">
    <property type="term" value="P:positive regulation of DNA-templated transcription"/>
    <property type="evidence" value="ECO:0000318"/>
    <property type="project" value="GO_Central"/>
</dbReference>
<dbReference type="CDD" id="cd00086">
    <property type="entry name" value="homeodomain"/>
    <property type="match status" value="1"/>
</dbReference>
<dbReference type="FunFam" id="1.10.10.60:FF:000200">
    <property type="entry name" value="Homeobox-leucine zipper protein ATHB-13"/>
    <property type="match status" value="1"/>
</dbReference>
<dbReference type="Gene3D" id="1.10.10.60">
    <property type="entry name" value="Homeodomain-like"/>
    <property type="match status" value="1"/>
</dbReference>
<dbReference type="InterPro" id="IPR001356">
    <property type="entry name" value="HD"/>
</dbReference>
<dbReference type="InterPro" id="IPR045224">
    <property type="entry name" value="HDZip_class_I_plant"/>
</dbReference>
<dbReference type="InterPro" id="IPR017970">
    <property type="entry name" value="Homeobox_CS"/>
</dbReference>
<dbReference type="InterPro" id="IPR009057">
    <property type="entry name" value="Homeodomain-like_sf"/>
</dbReference>
<dbReference type="InterPro" id="IPR000047">
    <property type="entry name" value="HTH_motif"/>
</dbReference>
<dbReference type="InterPro" id="IPR003106">
    <property type="entry name" value="Leu_zip_homeo"/>
</dbReference>
<dbReference type="PANTHER" id="PTHR24326">
    <property type="entry name" value="HOMEOBOX-LEUCINE ZIPPER PROTEIN"/>
    <property type="match status" value="1"/>
</dbReference>
<dbReference type="PANTHER" id="PTHR24326:SF176">
    <property type="entry name" value="HOMEOBOX-LEUCINE ZIPPER PROTEIN ATHB-13"/>
    <property type="match status" value="1"/>
</dbReference>
<dbReference type="Pfam" id="PF02183">
    <property type="entry name" value="HALZ"/>
    <property type="match status" value="1"/>
</dbReference>
<dbReference type="Pfam" id="PF00046">
    <property type="entry name" value="Homeodomain"/>
    <property type="match status" value="1"/>
</dbReference>
<dbReference type="PRINTS" id="PR00031">
    <property type="entry name" value="HTHREPRESSR"/>
</dbReference>
<dbReference type="SMART" id="SM00389">
    <property type="entry name" value="HOX"/>
    <property type="match status" value="1"/>
</dbReference>
<dbReference type="SUPFAM" id="SSF46689">
    <property type="entry name" value="Homeodomain-like"/>
    <property type="match status" value="1"/>
</dbReference>
<dbReference type="PROSITE" id="PS00027">
    <property type="entry name" value="HOMEOBOX_1"/>
    <property type="match status" value="1"/>
</dbReference>
<dbReference type="PROSITE" id="PS50071">
    <property type="entry name" value="HOMEOBOX_2"/>
    <property type="match status" value="1"/>
</dbReference>
<proteinExistence type="evidence at transcript level"/>
<accession>Q8S7W9</accession>
<accession>Q6Q7E4</accession>
<organism>
    <name type="scientific">Oryza sativa subsp. japonica</name>
    <name type="common">Rice</name>
    <dbReference type="NCBI Taxonomy" id="39947"/>
    <lineage>
        <taxon>Eukaryota</taxon>
        <taxon>Viridiplantae</taxon>
        <taxon>Streptophyta</taxon>
        <taxon>Embryophyta</taxon>
        <taxon>Tracheophyta</taxon>
        <taxon>Spermatophyta</taxon>
        <taxon>Magnoliopsida</taxon>
        <taxon>Liliopsida</taxon>
        <taxon>Poales</taxon>
        <taxon>Poaceae</taxon>
        <taxon>BOP clade</taxon>
        <taxon>Oryzoideae</taxon>
        <taxon>Oryzeae</taxon>
        <taxon>Oryzinae</taxon>
        <taxon>Oryza</taxon>
        <taxon>Oryza sativa</taxon>
    </lineage>
</organism>
<protein>
    <recommendedName>
        <fullName>Homeobox-leucine zipper protein HOX21</fullName>
    </recommendedName>
    <alternativeName>
        <fullName>HD-ZIP protein HOX21</fullName>
    </alternativeName>
    <alternativeName>
        <fullName>Homeodomain transcription factor HOX21</fullName>
    </alternativeName>
    <alternativeName>
        <fullName>OsHox21</fullName>
    </alternativeName>
</protein>
<feature type="chain" id="PRO_0000331715" description="Homeobox-leucine zipper protein HOX21">
    <location>
        <begin position="1"/>
        <end position="366"/>
    </location>
</feature>
<feature type="DNA-binding region" description="Homeobox" evidence="2">
    <location>
        <begin position="127"/>
        <end position="186"/>
    </location>
</feature>
<feature type="region of interest" description="Disordered" evidence="3">
    <location>
        <begin position="25"/>
        <end position="81"/>
    </location>
</feature>
<feature type="region of interest" description="Disordered" evidence="3">
    <location>
        <begin position="94"/>
        <end position="132"/>
    </location>
</feature>
<feature type="region of interest" description="Leucine-zipper">
    <location>
        <begin position="185"/>
        <end position="229"/>
    </location>
</feature>
<feature type="region of interest" description="Disordered" evidence="3">
    <location>
        <begin position="239"/>
        <end position="287"/>
    </location>
</feature>
<feature type="region of interest" description="Disordered" evidence="3">
    <location>
        <begin position="312"/>
        <end position="336"/>
    </location>
</feature>
<feature type="compositionally biased region" description="Basic residues" evidence="3">
    <location>
        <begin position="36"/>
        <end position="48"/>
    </location>
</feature>
<feature type="compositionally biased region" description="Pro residues" evidence="3">
    <location>
        <begin position="62"/>
        <end position="74"/>
    </location>
</feature>
<feature type="compositionally biased region" description="Gly residues" evidence="3">
    <location>
        <begin position="103"/>
        <end position="115"/>
    </location>
</feature>
<feature type="compositionally biased region" description="Polar residues" evidence="3">
    <location>
        <begin position="240"/>
        <end position="252"/>
    </location>
</feature>
<name>HOX21_ORYSJ</name>
<gene>
    <name type="primary">HOX21</name>
    <name type="ordered locus">Os03g0170600</name>
    <name type="ordered locus">LOC_Os03g07450</name>
    <name type="ORF">OSJNBa0091P11.3</name>
</gene>
<keyword id="KW-0238">DNA-binding</keyword>
<keyword id="KW-0371">Homeobox</keyword>
<keyword id="KW-0539">Nucleus</keyword>
<keyword id="KW-1185">Reference proteome</keyword>
<keyword id="KW-0804">Transcription</keyword>
<keyword id="KW-0805">Transcription regulation</keyword>
<comment type="function">
    <text evidence="1">Probable transcription factor.</text>
</comment>
<comment type="subcellular location">
    <subcellularLocation>
        <location evidence="5">Nucleus</location>
    </subcellularLocation>
</comment>
<comment type="tissue specificity">
    <text evidence="4">Expressed in seedlings, roots, stems, leaf blades and panicles.</text>
</comment>
<comment type="similarity">
    <text evidence="5">Belongs to the HD-ZIP homeobox family. Class I subfamily.</text>
</comment>